<accession>P0DD51</accession>
<accession>Q8K8Z7</accession>
<name>PTH_STRPQ</name>
<protein>
    <recommendedName>
        <fullName evidence="1">Peptidyl-tRNA hydrolase</fullName>
        <shortName evidence="1">Pth</shortName>
        <ecNumber evidence="1">3.1.1.29</ecNumber>
    </recommendedName>
</protein>
<proteinExistence type="inferred from homology"/>
<keyword id="KW-0963">Cytoplasm</keyword>
<keyword id="KW-0378">Hydrolase</keyword>
<keyword id="KW-0694">RNA-binding</keyword>
<keyword id="KW-0820">tRNA-binding</keyword>
<gene>
    <name evidence="1" type="primary">pth</name>
    <name type="ordered locus">SPs0005</name>
</gene>
<comment type="function">
    <text evidence="1">Hydrolyzes ribosome-free peptidyl-tRNAs (with 1 or more amino acids incorporated), which drop off the ribosome during protein synthesis, or as a result of ribosome stalling.</text>
</comment>
<comment type="function">
    <text evidence="1">Catalyzes the release of premature peptidyl moieties from peptidyl-tRNA molecules trapped in stalled 50S ribosomal subunits, and thus maintains levels of free tRNAs and 50S ribosomes.</text>
</comment>
<comment type="catalytic activity">
    <reaction evidence="1">
        <text>an N-acyl-L-alpha-aminoacyl-tRNA + H2O = an N-acyl-L-amino acid + a tRNA + H(+)</text>
        <dbReference type="Rhea" id="RHEA:54448"/>
        <dbReference type="Rhea" id="RHEA-COMP:10123"/>
        <dbReference type="Rhea" id="RHEA-COMP:13883"/>
        <dbReference type="ChEBI" id="CHEBI:15377"/>
        <dbReference type="ChEBI" id="CHEBI:15378"/>
        <dbReference type="ChEBI" id="CHEBI:59874"/>
        <dbReference type="ChEBI" id="CHEBI:78442"/>
        <dbReference type="ChEBI" id="CHEBI:138191"/>
        <dbReference type="EC" id="3.1.1.29"/>
    </reaction>
</comment>
<comment type="subunit">
    <text evidence="1">Monomer.</text>
</comment>
<comment type="subcellular location">
    <subcellularLocation>
        <location evidence="1">Cytoplasm</location>
    </subcellularLocation>
</comment>
<comment type="similarity">
    <text evidence="1">Belongs to the PTH family.</text>
</comment>
<dbReference type="EC" id="3.1.1.29" evidence="1"/>
<dbReference type="EMBL" id="BA000034">
    <property type="protein sequence ID" value="BAC63100.1"/>
    <property type="molecule type" value="Genomic_DNA"/>
</dbReference>
<dbReference type="RefSeq" id="WP_011054086.1">
    <property type="nucleotide sequence ID" value="NC_004606.1"/>
</dbReference>
<dbReference type="SMR" id="P0DD51"/>
<dbReference type="KEGG" id="sps:SPs0005"/>
<dbReference type="HOGENOM" id="CLU_062456_4_1_9"/>
<dbReference type="GO" id="GO:0005737">
    <property type="term" value="C:cytoplasm"/>
    <property type="evidence" value="ECO:0007669"/>
    <property type="project" value="UniProtKB-SubCell"/>
</dbReference>
<dbReference type="GO" id="GO:0004045">
    <property type="term" value="F:peptidyl-tRNA hydrolase activity"/>
    <property type="evidence" value="ECO:0007669"/>
    <property type="project" value="UniProtKB-UniRule"/>
</dbReference>
<dbReference type="GO" id="GO:0000049">
    <property type="term" value="F:tRNA binding"/>
    <property type="evidence" value="ECO:0007669"/>
    <property type="project" value="UniProtKB-UniRule"/>
</dbReference>
<dbReference type="GO" id="GO:0006515">
    <property type="term" value="P:protein quality control for misfolded or incompletely synthesized proteins"/>
    <property type="evidence" value="ECO:0007669"/>
    <property type="project" value="UniProtKB-UniRule"/>
</dbReference>
<dbReference type="GO" id="GO:0072344">
    <property type="term" value="P:rescue of stalled ribosome"/>
    <property type="evidence" value="ECO:0007669"/>
    <property type="project" value="UniProtKB-UniRule"/>
</dbReference>
<dbReference type="CDD" id="cd00462">
    <property type="entry name" value="PTH"/>
    <property type="match status" value="1"/>
</dbReference>
<dbReference type="FunFam" id="3.40.50.1470:FF:000001">
    <property type="entry name" value="Peptidyl-tRNA hydrolase"/>
    <property type="match status" value="1"/>
</dbReference>
<dbReference type="Gene3D" id="3.40.50.1470">
    <property type="entry name" value="Peptidyl-tRNA hydrolase"/>
    <property type="match status" value="1"/>
</dbReference>
<dbReference type="HAMAP" id="MF_00083">
    <property type="entry name" value="Pept_tRNA_hydro_bact"/>
    <property type="match status" value="1"/>
</dbReference>
<dbReference type="InterPro" id="IPR001328">
    <property type="entry name" value="Pept_tRNA_hydro"/>
</dbReference>
<dbReference type="InterPro" id="IPR018171">
    <property type="entry name" value="Pept_tRNA_hydro_CS"/>
</dbReference>
<dbReference type="InterPro" id="IPR036416">
    <property type="entry name" value="Pept_tRNA_hydro_sf"/>
</dbReference>
<dbReference type="NCBIfam" id="TIGR00447">
    <property type="entry name" value="pth"/>
    <property type="match status" value="1"/>
</dbReference>
<dbReference type="PANTHER" id="PTHR17224">
    <property type="entry name" value="PEPTIDYL-TRNA HYDROLASE"/>
    <property type="match status" value="1"/>
</dbReference>
<dbReference type="PANTHER" id="PTHR17224:SF1">
    <property type="entry name" value="PEPTIDYL-TRNA HYDROLASE"/>
    <property type="match status" value="1"/>
</dbReference>
<dbReference type="Pfam" id="PF01195">
    <property type="entry name" value="Pept_tRNA_hydro"/>
    <property type="match status" value="1"/>
</dbReference>
<dbReference type="SUPFAM" id="SSF53178">
    <property type="entry name" value="Peptidyl-tRNA hydrolase-like"/>
    <property type="match status" value="1"/>
</dbReference>
<dbReference type="PROSITE" id="PS01195">
    <property type="entry name" value="PEPT_TRNA_HYDROL_1"/>
    <property type="match status" value="1"/>
</dbReference>
<dbReference type="PROSITE" id="PS01196">
    <property type="entry name" value="PEPT_TRNA_HYDROL_2"/>
    <property type="match status" value="1"/>
</dbReference>
<feature type="chain" id="PRO_0000411465" description="Peptidyl-tRNA hydrolase">
    <location>
        <begin position="1"/>
        <end position="189"/>
    </location>
</feature>
<feature type="active site" description="Proton acceptor" evidence="1">
    <location>
        <position position="20"/>
    </location>
</feature>
<feature type="binding site" evidence="1">
    <location>
        <position position="15"/>
    </location>
    <ligand>
        <name>tRNA</name>
        <dbReference type="ChEBI" id="CHEBI:17843"/>
    </ligand>
</feature>
<feature type="binding site" evidence="1">
    <location>
        <position position="66"/>
    </location>
    <ligand>
        <name>tRNA</name>
        <dbReference type="ChEBI" id="CHEBI:17843"/>
    </ligand>
</feature>
<feature type="binding site" evidence="1">
    <location>
        <position position="68"/>
    </location>
    <ligand>
        <name>tRNA</name>
        <dbReference type="ChEBI" id="CHEBI:17843"/>
    </ligand>
</feature>
<feature type="binding site" evidence="1">
    <location>
        <position position="114"/>
    </location>
    <ligand>
        <name>tRNA</name>
        <dbReference type="ChEBI" id="CHEBI:17843"/>
    </ligand>
</feature>
<feature type="site" description="Discriminates between blocked and unblocked aminoacyl-tRNA" evidence="1">
    <location>
        <position position="10"/>
    </location>
</feature>
<feature type="site" description="Stabilizes the basic form of H active site to accept a proton" evidence="1">
    <location>
        <position position="93"/>
    </location>
</feature>
<organism>
    <name type="scientific">Streptococcus pyogenes serotype M3 (strain SSI-1)</name>
    <dbReference type="NCBI Taxonomy" id="193567"/>
    <lineage>
        <taxon>Bacteria</taxon>
        <taxon>Bacillati</taxon>
        <taxon>Bacillota</taxon>
        <taxon>Bacilli</taxon>
        <taxon>Lactobacillales</taxon>
        <taxon>Streptococcaceae</taxon>
        <taxon>Streptococcus</taxon>
    </lineage>
</organism>
<sequence>MVKMIVGLGNPGSKYEKTKHNIGFMAIDNIVKNLDVTFTDDKNFKAQIGSTFINHEKVCFVKPTTFMNNSGIAVKALLTYYNIDITDLIVIYDDLDMEVSKLRLRSKGSAGGHNGIKSIIAHIGTQEFNRIKVGIGRPLKGMTVINHVMGQFNTEDNIAISLTLDRVVNAVKFYLQENDFEKTMQKFNG</sequence>
<evidence type="ECO:0000255" key="1">
    <source>
        <dbReference type="HAMAP-Rule" id="MF_00083"/>
    </source>
</evidence>
<reference key="1">
    <citation type="journal article" date="2003" name="Genome Res.">
        <title>Genome sequence of an M3 strain of Streptococcus pyogenes reveals a large-scale genomic rearrangement in invasive strains and new insights into phage evolution.</title>
        <authorList>
            <person name="Nakagawa I."/>
            <person name="Kurokawa K."/>
            <person name="Yamashita A."/>
            <person name="Nakata M."/>
            <person name="Tomiyasu Y."/>
            <person name="Okahashi N."/>
            <person name="Kawabata S."/>
            <person name="Yamazaki K."/>
            <person name="Shiba T."/>
            <person name="Yasunaga T."/>
            <person name="Hayashi H."/>
            <person name="Hattori M."/>
            <person name="Hamada S."/>
        </authorList>
    </citation>
    <scope>NUCLEOTIDE SEQUENCE [LARGE SCALE GENOMIC DNA]</scope>
    <source>
        <strain>SSI-1</strain>
    </source>
</reference>